<name>O1615_CONAE</name>
<evidence type="ECO:0000250" key="1"/>
<evidence type="ECO:0000255" key="2"/>
<evidence type="ECO:0000305" key="3"/>
<proteinExistence type="evidence at transcript level"/>
<sequence>MKLTCVLIIAVLFLTACQLTTGETYSRGEQKDHALRSTDKNSKLTRQCTPVGGYCFDHHHCCSNHCIKSIGRCVAH</sequence>
<dbReference type="EMBL" id="AF215057">
    <property type="protein sequence ID" value="AAG60485.1"/>
    <property type="molecule type" value="mRNA"/>
</dbReference>
<dbReference type="SMR" id="Q9BP81"/>
<dbReference type="ConoServer" id="744">
    <property type="toxin name" value="Ar6.15 precursor"/>
</dbReference>
<dbReference type="GO" id="GO:0005576">
    <property type="term" value="C:extracellular region"/>
    <property type="evidence" value="ECO:0007669"/>
    <property type="project" value="UniProtKB-SubCell"/>
</dbReference>
<dbReference type="GO" id="GO:0008200">
    <property type="term" value="F:ion channel inhibitor activity"/>
    <property type="evidence" value="ECO:0007669"/>
    <property type="project" value="InterPro"/>
</dbReference>
<dbReference type="GO" id="GO:0090729">
    <property type="term" value="F:toxin activity"/>
    <property type="evidence" value="ECO:0007669"/>
    <property type="project" value="UniProtKB-KW"/>
</dbReference>
<dbReference type="InterPro" id="IPR004214">
    <property type="entry name" value="Conotoxin"/>
</dbReference>
<dbReference type="Pfam" id="PF02950">
    <property type="entry name" value="Conotoxin"/>
    <property type="match status" value="1"/>
</dbReference>
<keyword id="KW-1015">Disulfide bond</keyword>
<keyword id="KW-0960">Knottin</keyword>
<keyword id="KW-0528">Neurotoxin</keyword>
<keyword id="KW-0873">Pyrrolidone carboxylic acid</keyword>
<keyword id="KW-0964">Secreted</keyword>
<keyword id="KW-0732">Signal</keyword>
<keyword id="KW-0800">Toxin</keyword>
<protein>
    <recommendedName>
        <fullName>Conotoxin ArMKLT2-032</fullName>
    </recommendedName>
</protein>
<comment type="subcellular location">
    <subcellularLocation>
        <location evidence="1">Secreted</location>
    </subcellularLocation>
</comment>
<comment type="tissue specificity">
    <text>Expressed by the venom duct.</text>
</comment>
<comment type="domain">
    <text evidence="1">The presence of a 'disulfide through disulfide knot' structurally defines this protein as a knottin.</text>
</comment>
<comment type="domain">
    <text>The cysteine framework is VI/VII (C-C-CC-C-C).</text>
</comment>
<comment type="similarity">
    <text evidence="3">Belongs to the conotoxin O1 superfamily.</text>
</comment>
<reference key="1">
    <citation type="journal article" date="2001" name="Mol. Biol. Evol.">
        <title>Mechanisms for evolving hypervariability: the case of conopeptides.</title>
        <authorList>
            <person name="Conticello S.G."/>
            <person name="Gilad Y."/>
            <person name="Avidan N."/>
            <person name="Ben-Asher E."/>
            <person name="Levy Z."/>
            <person name="Fainzilber M."/>
        </authorList>
    </citation>
    <scope>NUCLEOTIDE SEQUENCE [MRNA]</scope>
    <source>
        <tissue>Venom duct</tissue>
    </source>
</reference>
<accession>Q9BP81</accession>
<feature type="signal peptide" evidence="2">
    <location>
        <begin position="1"/>
        <end position="22"/>
    </location>
</feature>
<feature type="propeptide" id="PRO_0000404744" evidence="1">
    <location>
        <begin position="23"/>
        <end position="46"/>
    </location>
</feature>
<feature type="peptide" id="PRO_0000404745" description="Conotoxin ArMKLT2-032">
    <location>
        <begin position="47"/>
        <end position="76"/>
    </location>
</feature>
<feature type="modified residue" description="Pyrrolidone carboxylic acid" evidence="1">
    <location>
        <position position="47"/>
    </location>
</feature>
<feature type="disulfide bond" evidence="1">
    <location>
        <begin position="48"/>
        <end position="62"/>
    </location>
</feature>
<feature type="disulfide bond" evidence="1">
    <location>
        <begin position="55"/>
        <end position="66"/>
    </location>
</feature>
<feature type="disulfide bond" evidence="1">
    <location>
        <begin position="61"/>
        <end position="73"/>
    </location>
</feature>
<organism>
    <name type="scientific">Conus arenatus</name>
    <name type="common">Sand-dusted cone</name>
    <dbReference type="NCBI Taxonomy" id="89451"/>
    <lineage>
        <taxon>Eukaryota</taxon>
        <taxon>Metazoa</taxon>
        <taxon>Spiralia</taxon>
        <taxon>Lophotrochozoa</taxon>
        <taxon>Mollusca</taxon>
        <taxon>Gastropoda</taxon>
        <taxon>Caenogastropoda</taxon>
        <taxon>Neogastropoda</taxon>
        <taxon>Conoidea</taxon>
        <taxon>Conidae</taxon>
        <taxon>Conus</taxon>
    </lineage>
</organism>